<organism>
    <name type="scientific">Mus musculus</name>
    <name type="common">Mouse</name>
    <dbReference type="NCBI Taxonomy" id="10090"/>
    <lineage>
        <taxon>Eukaryota</taxon>
        <taxon>Metazoa</taxon>
        <taxon>Chordata</taxon>
        <taxon>Craniata</taxon>
        <taxon>Vertebrata</taxon>
        <taxon>Euteleostomi</taxon>
        <taxon>Mammalia</taxon>
        <taxon>Eutheria</taxon>
        <taxon>Euarchontoglires</taxon>
        <taxon>Glires</taxon>
        <taxon>Rodentia</taxon>
        <taxon>Myomorpha</taxon>
        <taxon>Muroidea</taxon>
        <taxon>Muridae</taxon>
        <taxon>Murinae</taxon>
        <taxon>Mus</taxon>
        <taxon>Mus</taxon>
    </lineage>
</organism>
<evidence type="ECO:0000250" key="1"/>
<evidence type="ECO:0000255" key="2"/>
<evidence type="ECO:0000305" key="3"/>
<dbReference type="EMBL" id="AF124428">
    <property type="protein sequence ID" value="AAD17322.1"/>
    <property type="molecule type" value="Genomic_DNA"/>
</dbReference>
<dbReference type="EMBL" id="AK010869">
    <property type="protein sequence ID" value="BAB27234.1"/>
    <property type="molecule type" value="mRNA"/>
</dbReference>
<dbReference type="CCDS" id="CCDS39314.1"/>
<dbReference type="RefSeq" id="NP_065250.1">
    <property type="nucleotide sequence ID" value="NM_020504.4"/>
</dbReference>
<dbReference type="SMR" id="Q9Z0S4"/>
<dbReference type="FunCoup" id="Q9Z0S4">
    <property type="interactions" value="230"/>
</dbReference>
<dbReference type="STRING" id="10090.ENSMUSP00000008987"/>
<dbReference type="PaxDb" id="10090-ENSMUSP00000008987"/>
<dbReference type="ProteomicsDB" id="283576"/>
<dbReference type="DNASU" id="57255"/>
<dbReference type="Ensembl" id="ENSMUST00000008987.5">
    <property type="protein sequence ID" value="ENSMUSP00000008987.5"/>
    <property type="gene ID" value="ENSMUSG00000008843.5"/>
</dbReference>
<dbReference type="GeneID" id="57255"/>
<dbReference type="KEGG" id="mmu:57255"/>
<dbReference type="UCSC" id="uc008zwy.2">
    <property type="organism name" value="mouse"/>
</dbReference>
<dbReference type="AGR" id="MGI:1913102"/>
<dbReference type="CTD" id="57255"/>
<dbReference type="MGI" id="MGI:1913102">
    <property type="gene designation" value="Cldn13"/>
</dbReference>
<dbReference type="VEuPathDB" id="HostDB:ENSMUSG00000008843"/>
<dbReference type="eggNOG" id="ENOG502QSCN">
    <property type="taxonomic scope" value="Eukaryota"/>
</dbReference>
<dbReference type="GeneTree" id="ENSGT00940000154762"/>
<dbReference type="HOGENOM" id="CLU_076370_1_2_1"/>
<dbReference type="InParanoid" id="Q9Z0S4"/>
<dbReference type="OMA" id="WIQCTLY"/>
<dbReference type="OrthoDB" id="9616094at2759"/>
<dbReference type="PhylomeDB" id="Q9Z0S4"/>
<dbReference type="TreeFam" id="TF331936"/>
<dbReference type="BioGRID-ORCS" id="57255">
    <property type="hits" value="4 hits in 77 CRISPR screens"/>
</dbReference>
<dbReference type="PRO" id="PR:Q9Z0S4"/>
<dbReference type="Proteomes" id="UP000000589">
    <property type="component" value="Chromosome 5"/>
</dbReference>
<dbReference type="RNAct" id="Q9Z0S4">
    <property type="molecule type" value="protein"/>
</dbReference>
<dbReference type="Bgee" id="ENSMUSG00000008843">
    <property type="expression patterns" value="Expressed in fetal liver hematopoietic progenitor cell and 46 other cell types or tissues"/>
</dbReference>
<dbReference type="ExpressionAtlas" id="Q9Z0S4">
    <property type="expression patterns" value="baseline and differential"/>
</dbReference>
<dbReference type="GO" id="GO:0005923">
    <property type="term" value="C:bicellular tight junction"/>
    <property type="evidence" value="ECO:0007669"/>
    <property type="project" value="UniProtKB-SubCell"/>
</dbReference>
<dbReference type="GO" id="GO:0016328">
    <property type="term" value="C:lateral plasma membrane"/>
    <property type="evidence" value="ECO:0000314"/>
    <property type="project" value="MGI"/>
</dbReference>
<dbReference type="GO" id="GO:0005198">
    <property type="term" value="F:structural molecule activity"/>
    <property type="evidence" value="ECO:0007669"/>
    <property type="project" value="InterPro"/>
</dbReference>
<dbReference type="Gene3D" id="1.20.140.150">
    <property type="match status" value="1"/>
</dbReference>
<dbReference type="InterPro" id="IPR006187">
    <property type="entry name" value="Claudin"/>
</dbReference>
<dbReference type="InterPro" id="IPR017974">
    <property type="entry name" value="Claudin_CS"/>
</dbReference>
<dbReference type="InterPro" id="IPR004031">
    <property type="entry name" value="PMP22/EMP/MP20/Claudin"/>
</dbReference>
<dbReference type="PANTHER" id="PTHR12002">
    <property type="entry name" value="CLAUDIN"/>
    <property type="match status" value="1"/>
</dbReference>
<dbReference type="Pfam" id="PF00822">
    <property type="entry name" value="PMP22_Claudin"/>
    <property type="match status" value="1"/>
</dbReference>
<dbReference type="PRINTS" id="PR01077">
    <property type="entry name" value="CLAUDIN"/>
</dbReference>
<dbReference type="PROSITE" id="PS01346">
    <property type="entry name" value="CLAUDIN"/>
    <property type="match status" value="1"/>
</dbReference>
<name>CLD13_MOUSE</name>
<proteinExistence type="evidence at protein level"/>
<reference key="1">
    <citation type="submission" date="1999-01" db="EMBL/GenBank/DDBJ databases">
        <authorList>
            <person name="Morita K."/>
            <person name="Furuse M."/>
            <person name="Tsukita S."/>
        </authorList>
    </citation>
    <scope>NUCLEOTIDE SEQUENCE</scope>
</reference>
<reference key="2">
    <citation type="journal article" date="2005" name="Science">
        <title>The transcriptional landscape of the mammalian genome.</title>
        <authorList>
            <person name="Carninci P."/>
            <person name="Kasukawa T."/>
            <person name="Katayama S."/>
            <person name="Gough J."/>
            <person name="Frith M.C."/>
            <person name="Maeda N."/>
            <person name="Oyama R."/>
            <person name="Ravasi T."/>
            <person name="Lenhard B."/>
            <person name="Wells C."/>
            <person name="Kodzius R."/>
            <person name="Shimokawa K."/>
            <person name="Bajic V.B."/>
            <person name="Brenner S.E."/>
            <person name="Batalov S."/>
            <person name="Forrest A.R."/>
            <person name="Zavolan M."/>
            <person name="Davis M.J."/>
            <person name="Wilming L.G."/>
            <person name="Aidinis V."/>
            <person name="Allen J.E."/>
            <person name="Ambesi-Impiombato A."/>
            <person name="Apweiler R."/>
            <person name="Aturaliya R.N."/>
            <person name="Bailey T.L."/>
            <person name="Bansal M."/>
            <person name="Baxter L."/>
            <person name="Beisel K.W."/>
            <person name="Bersano T."/>
            <person name="Bono H."/>
            <person name="Chalk A.M."/>
            <person name="Chiu K.P."/>
            <person name="Choudhary V."/>
            <person name="Christoffels A."/>
            <person name="Clutterbuck D.R."/>
            <person name="Crowe M.L."/>
            <person name="Dalla E."/>
            <person name="Dalrymple B.P."/>
            <person name="de Bono B."/>
            <person name="Della Gatta G."/>
            <person name="di Bernardo D."/>
            <person name="Down T."/>
            <person name="Engstrom P."/>
            <person name="Fagiolini M."/>
            <person name="Faulkner G."/>
            <person name="Fletcher C.F."/>
            <person name="Fukushima T."/>
            <person name="Furuno M."/>
            <person name="Futaki S."/>
            <person name="Gariboldi M."/>
            <person name="Georgii-Hemming P."/>
            <person name="Gingeras T.R."/>
            <person name="Gojobori T."/>
            <person name="Green R.E."/>
            <person name="Gustincich S."/>
            <person name="Harbers M."/>
            <person name="Hayashi Y."/>
            <person name="Hensch T.K."/>
            <person name="Hirokawa N."/>
            <person name="Hill D."/>
            <person name="Huminiecki L."/>
            <person name="Iacono M."/>
            <person name="Ikeo K."/>
            <person name="Iwama A."/>
            <person name="Ishikawa T."/>
            <person name="Jakt M."/>
            <person name="Kanapin A."/>
            <person name="Katoh M."/>
            <person name="Kawasawa Y."/>
            <person name="Kelso J."/>
            <person name="Kitamura H."/>
            <person name="Kitano H."/>
            <person name="Kollias G."/>
            <person name="Krishnan S.P."/>
            <person name="Kruger A."/>
            <person name="Kummerfeld S.K."/>
            <person name="Kurochkin I.V."/>
            <person name="Lareau L.F."/>
            <person name="Lazarevic D."/>
            <person name="Lipovich L."/>
            <person name="Liu J."/>
            <person name="Liuni S."/>
            <person name="McWilliam S."/>
            <person name="Madan Babu M."/>
            <person name="Madera M."/>
            <person name="Marchionni L."/>
            <person name="Matsuda H."/>
            <person name="Matsuzawa S."/>
            <person name="Miki H."/>
            <person name="Mignone F."/>
            <person name="Miyake S."/>
            <person name="Morris K."/>
            <person name="Mottagui-Tabar S."/>
            <person name="Mulder N."/>
            <person name="Nakano N."/>
            <person name="Nakauchi H."/>
            <person name="Ng P."/>
            <person name="Nilsson R."/>
            <person name="Nishiguchi S."/>
            <person name="Nishikawa S."/>
            <person name="Nori F."/>
            <person name="Ohara O."/>
            <person name="Okazaki Y."/>
            <person name="Orlando V."/>
            <person name="Pang K.C."/>
            <person name="Pavan W.J."/>
            <person name="Pavesi G."/>
            <person name="Pesole G."/>
            <person name="Petrovsky N."/>
            <person name="Piazza S."/>
            <person name="Reed J."/>
            <person name="Reid J.F."/>
            <person name="Ring B.Z."/>
            <person name="Ringwald M."/>
            <person name="Rost B."/>
            <person name="Ruan Y."/>
            <person name="Salzberg S.L."/>
            <person name="Sandelin A."/>
            <person name="Schneider C."/>
            <person name="Schoenbach C."/>
            <person name="Sekiguchi K."/>
            <person name="Semple C.A."/>
            <person name="Seno S."/>
            <person name="Sessa L."/>
            <person name="Sheng Y."/>
            <person name="Shibata Y."/>
            <person name="Shimada H."/>
            <person name="Shimada K."/>
            <person name="Silva D."/>
            <person name="Sinclair B."/>
            <person name="Sperling S."/>
            <person name="Stupka E."/>
            <person name="Sugiura K."/>
            <person name="Sultana R."/>
            <person name="Takenaka Y."/>
            <person name="Taki K."/>
            <person name="Tammoja K."/>
            <person name="Tan S.L."/>
            <person name="Tang S."/>
            <person name="Taylor M.S."/>
            <person name="Tegner J."/>
            <person name="Teichmann S.A."/>
            <person name="Ueda H.R."/>
            <person name="van Nimwegen E."/>
            <person name="Verardo R."/>
            <person name="Wei C.L."/>
            <person name="Yagi K."/>
            <person name="Yamanishi H."/>
            <person name="Zabarovsky E."/>
            <person name="Zhu S."/>
            <person name="Zimmer A."/>
            <person name="Hide W."/>
            <person name="Bult C."/>
            <person name="Grimmond S.M."/>
            <person name="Teasdale R.D."/>
            <person name="Liu E.T."/>
            <person name="Brusic V."/>
            <person name="Quackenbush J."/>
            <person name="Wahlestedt C."/>
            <person name="Mattick J.S."/>
            <person name="Hume D.A."/>
            <person name="Kai C."/>
            <person name="Sasaki D."/>
            <person name="Tomaru Y."/>
            <person name="Fukuda S."/>
            <person name="Kanamori-Katayama M."/>
            <person name="Suzuki M."/>
            <person name="Aoki J."/>
            <person name="Arakawa T."/>
            <person name="Iida J."/>
            <person name="Imamura K."/>
            <person name="Itoh M."/>
            <person name="Kato T."/>
            <person name="Kawaji H."/>
            <person name="Kawagashira N."/>
            <person name="Kawashima T."/>
            <person name="Kojima M."/>
            <person name="Kondo S."/>
            <person name="Konno H."/>
            <person name="Nakano K."/>
            <person name="Ninomiya N."/>
            <person name="Nishio T."/>
            <person name="Okada M."/>
            <person name="Plessy C."/>
            <person name="Shibata K."/>
            <person name="Shiraki T."/>
            <person name="Suzuki S."/>
            <person name="Tagami M."/>
            <person name="Waki K."/>
            <person name="Watahiki A."/>
            <person name="Okamura-Oho Y."/>
            <person name="Suzuki H."/>
            <person name="Kawai J."/>
            <person name="Hayashizaki Y."/>
        </authorList>
    </citation>
    <scope>NUCLEOTIDE SEQUENCE [LARGE SCALE MRNA]</scope>
    <source>
        <strain>C57BL/6J</strain>
        <tissue>Embryonic liver</tissue>
    </source>
</reference>
<reference key="3">
    <citation type="journal article" date="2010" name="Cell">
        <title>A tissue-specific atlas of mouse protein phosphorylation and expression.</title>
        <authorList>
            <person name="Huttlin E.L."/>
            <person name="Jedrychowski M.P."/>
            <person name="Elias J.E."/>
            <person name="Goswami T."/>
            <person name="Rad R."/>
            <person name="Beausoleil S.A."/>
            <person name="Villen J."/>
            <person name="Haas W."/>
            <person name="Sowa M.E."/>
            <person name="Gygi S.P."/>
        </authorList>
    </citation>
    <scope>IDENTIFICATION BY MASS SPECTROMETRY [LARGE SCALE ANALYSIS]</scope>
    <source>
        <tissue>Spleen</tissue>
    </source>
</reference>
<gene>
    <name type="primary">Cldn13</name>
</gene>
<protein>
    <recommendedName>
        <fullName>Claudin-13</fullName>
    </recommendedName>
</protein>
<keyword id="KW-0965">Cell junction</keyword>
<keyword id="KW-1003">Cell membrane</keyword>
<keyword id="KW-0472">Membrane</keyword>
<keyword id="KW-1185">Reference proteome</keyword>
<keyword id="KW-0796">Tight junction</keyword>
<keyword id="KW-0812">Transmembrane</keyword>
<keyword id="KW-1133">Transmembrane helix</keyword>
<feature type="chain" id="PRO_0000144768" description="Claudin-13">
    <location>
        <begin position="1"/>
        <end position="211"/>
    </location>
</feature>
<feature type="topological domain" description="Cytoplasmic" evidence="2">
    <location>
        <begin position="1"/>
        <end position="8"/>
    </location>
</feature>
<feature type="transmembrane region" description="Helical" evidence="2">
    <location>
        <begin position="9"/>
        <end position="29"/>
    </location>
</feature>
<feature type="topological domain" description="Extracellular" evidence="2">
    <location>
        <begin position="30"/>
        <end position="80"/>
    </location>
</feature>
<feature type="transmembrane region" description="Helical" evidence="2">
    <location>
        <begin position="81"/>
        <end position="101"/>
    </location>
</feature>
<feature type="topological domain" description="Cytoplasmic" evidence="2">
    <location>
        <begin position="102"/>
        <end position="118"/>
    </location>
</feature>
<feature type="transmembrane region" description="Helical" evidence="2">
    <location>
        <begin position="119"/>
        <end position="139"/>
    </location>
</feature>
<feature type="topological domain" description="Extracellular" evidence="2">
    <location>
        <begin position="140"/>
        <end position="165"/>
    </location>
</feature>
<feature type="transmembrane region" description="Helical" evidence="2">
    <location>
        <begin position="166"/>
        <end position="186"/>
    </location>
</feature>
<feature type="topological domain" description="Cytoplasmic" evidence="2">
    <location>
        <begin position="187"/>
        <end position="211"/>
    </location>
</feature>
<accession>Q9Z0S4</accession>
<sequence length="211" mass="23504">MVVSKQEAISFSVTSLGWVGAIVSCVLPVWRVTFPDDETDPDATIWEGLWHICQVRENRWIQCTLYDTRILVAQDIKVSRVFMVICTIGTWLGLLLCVLGDWRINCFMNFTIEENLLKVAGGMFLSVGLLMLVPLSWVTHNIIHGFFNPLLGFSKKVQMGSSLSLAWTSSLLLLLGGILLCVNIPVCRDFPRCIETPSARPSGANNDTLDV</sequence>
<comment type="function">
    <text evidence="1">Plays a major role in tight junction-specific obliteration of the intercellular space, through calcium-independent cell-adhesion activity.</text>
</comment>
<comment type="subcellular location">
    <subcellularLocation>
        <location>Cell junction</location>
        <location>Tight junction</location>
    </subcellularLocation>
    <subcellularLocation>
        <location>Cell membrane</location>
        <topology>Multi-pass membrane protein</topology>
    </subcellularLocation>
</comment>
<comment type="similarity">
    <text evidence="3">Belongs to the claudin family.</text>
</comment>